<feature type="chain" id="PRO_0000376373" description="NADH-quinone oxidoreductase subunit B">
    <location>
        <begin position="1"/>
        <end position="224"/>
    </location>
</feature>
<feature type="binding site" evidence="1">
    <location>
        <position position="67"/>
    </location>
    <ligand>
        <name>[4Fe-4S] cluster</name>
        <dbReference type="ChEBI" id="CHEBI:49883"/>
    </ligand>
</feature>
<feature type="binding site" evidence="1">
    <location>
        <position position="68"/>
    </location>
    <ligand>
        <name>[4Fe-4S] cluster</name>
        <dbReference type="ChEBI" id="CHEBI:49883"/>
    </ligand>
</feature>
<feature type="binding site" evidence="1">
    <location>
        <position position="133"/>
    </location>
    <ligand>
        <name>[4Fe-4S] cluster</name>
        <dbReference type="ChEBI" id="CHEBI:49883"/>
    </ligand>
</feature>
<feature type="binding site" evidence="1">
    <location>
        <position position="162"/>
    </location>
    <ligand>
        <name>[4Fe-4S] cluster</name>
        <dbReference type="ChEBI" id="CHEBI:49883"/>
    </ligand>
</feature>
<keyword id="KW-0004">4Fe-4S</keyword>
<keyword id="KW-0997">Cell inner membrane</keyword>
<keyword id="KW-1003">Cell membrane</keyword>
<keyword id="KW-0408">Iron</keyword>
<keyword id="KW-0411">Iron-sulfur</keyword>
<keyword id="KW-0472">Membrane</keyword>
<keyword id="KW-0479">Metal-binding</keyword>
<keyword id="KW-0520">NAD</keyword>
<keyword id="KW-0874">Quinone</keyword>
<keyword id="KW-1278">Translocase</keyword>
<keyword id="KW-0813">Transport</keyword>
<keyword id="KW-0830">Ubiquinone</keyword>
<organism>
    <name type="scientific">Serratia proteamaculans (strain 568)</name>
    <dbReference type="NCBI Taxonomy" id="399741"/>
    <lineage>
        <taxon>Bacteria</taxon>
        <taxon>Pseudomonadati</taxon>
        <taxon>Pseudomonadota</taxon>
        <taxon>Gammaproteobacteria</taxon>
        <taxon>Enterobacterales</taxon>
        <taxon>Yersiniaceae</taxon>
        <taxon>Serratia</taxon>
    </lineage>
</organism>
<dbReference type="EC" id="7.1.1.-" evidence="1"/>
<dbReference type="EMBL" id="CP000826">
    <property type="protein sequence ID" value="ABV42405.1"/>
    <property type="molecule type" value="Genomic_DNA"/>
</dbReference>
<dbReference type="SMR" id="A8GH15"/>
<dbReference type="STRING" id="399741.Spro_3307"/>
<dbReference type="KEGG" id="spe:Spro_3307"/>
<dbReference type="eggNOG" id="COG0377">
    <property type="taxonomic scope" value="Bacteria"/>
</dbReference>
<dbReference type="HOGENOM" id="CLU_055737_7_3_6"/>
<dbReference type="OrthoDB" id="9786737at2"/>
<dbReference type="GO" id="GO:0005886">
    <property type="term" value="C:plasma membrane"/>
    <property type="evidence" value="ECO:0007669"/>
    <property type="project" value="UniProtKB-SubCell"/>
</dbReference>
<dbReference type="GO" id="GO:0045271">
    <property type="term" value="C:respiratory chain complex I"/>
    <property type="evidence" value="ECO:0007669"/>
    <property type="project" value="TreeGrafter"/>
</dbReference>
<dbReference type="GO" id="GO:0051539">
    <property type="term" value="F:4 iron, 4 sulfur cluster binding"/>
    <property type="evidence" value="ECO:0007669"/>
    <property type="project" value="UniProtKB-KW"/>
</dbReference>
<dbReference type="GO" id="GO:0005506">
    <property type="term" value="F:iron ion binding"/>
    <property type="evidence" value="ECO:0007669"/>
    <property type="project" value="UniProtKB-UniRule"/>
</dbReference>
<dbReference type="GO" id="GO:0008137">
    <property type="term" value="F:NADH dehydrogenase (ubiquinone) activity"/>
    <property type="evidence" value="ECO:0007669"/>
    <property type="project" value="InterPro"/>
</dbReference>
<dbReference type="GO" id="GO:0050136">
    <property type="term" value="F:NADH:ubiquinone reductase (non-electrogenic) activity"/>
    <property type="evidence" value="ECO:0007669"/>
    <property type="project" value="UniProtKB-UniRule"/>
</dbReference>
<dbReference type="GO" id="GO:0048038">
    <property type="term" value="F:quinone binding"/>
    <property type="evidence" value="ECO:0007669"/>
    <property type="project" value="UniProtKB-KW"/>
</dbReference>
<dbReference type="GO" id="GO:0009060">
    <property type="term" value="P:aerobic respiration"/>
    <property type="evidence" value="ECO:0007669"/>
    <property type="project" value="TreeGrafter"/>
</dbReference>
<dbReference type="GO" id="GO:0015990">
    <property type="term" value="P:electron transport coupled proton transport"/>
    <property type="evidence" value="ECO:0007669"/>
    <property type="project" value="TreeGrafter"/>
</dbReference>
<dbReference type="FunFam" id="3.40.50.12280:FF:000002">
    <property type="entry name" value="NADH-quinone oxidoreductase subunit B"/>
    <property type="match status" value="1"/>
</dbReference>
<dbReference type="Gene3D" id="3.40.50.12280">
    <property type="match status" value="1"/>
</dbReference>
<dbReference type="HAMAP" id="MF_01356">
    <property type="entry name" value="NDH1_NuoB"/>
    <property type="match status" value="1"/>
</dbReference>
<dbReference type="InterPro" id="IPR006137">
    <property type="entry name" value="NADH_UbQ_OxRdtase-like_20kDa"/>
</dbReference>
<dbReference type="InterPro" id="IPR006138">
    <property type="entry name" value="NADH_UQ_OxRdtase_20Kd_su"/>
</dbReference>
<dbReference type="NCBIfam" id="TIGR01957">
    <property type="entry name" value="nuoB_fam"/>
    <property type="match status" value="1"/>
</dbReference>
<dbReference type="NCBIfam" id="NF005012">
    <property type="entry name" value="PRK06411.1"/>
    <property type="match status" value="1"/>
</dbReference>
<dbReference type="PANTHER" id="PTHR11995">
    <property type="entry name" value="NADH DEHYDROGENASE"/>
    <property type="match status" value="1"/>
</dbReference>
<dbReference type="PANTHER" id="PTHR11995:SF14">
    <property type="entry name" value="NADH DEHYDROGENASE [UBIQUINONE] IRON-SULFUR PROTEIN 7, MITOCHONDRIAL"/>
    <property type="match status" value="1"/>
</dbReference>
<dbReference type="Pfam" id="PF01058">
    <property type="entry name" value="Oxidored_q6"/>
    <property type="match status" value="1"/>
</dbReference>
<dbReference type="SUPFAM" id="SSF56770">
    <property type="entry name" value="HydA/Nqo6-like"/>
    <property type="match status" value="1"/>
</dbReference>
<dbReference type="PROSITE" id="PS01150">
    <property type="entry name" value="COMPLEX1_20K"/>
    <property type="match status" value="1"/>
</dbReference>
<comment type="function">
    <text evidence="1">NDH-1 shuttles electrons from NADH, via FMN and iron-sulfur (Fe-S) centers, to quinones in the respiratory chain. The immediate electron acceptor for the enzyme in this species is believed to be ubiquinone. Couples the redox reaction to proton translocation (for every two electrons transferred, four hydrogen ions are translocated across the cytoplasmic membrane), and thus conserves the redox energy in a proton gradient.</text>
</comment>
<comment type="catalytic activity">
    <reaction evidence="1">
        <text>a quinone + NADH + 5 H(+)(in) = a quinol + NAD(+) + 4 H(+)(out)</text>
        <dbReference type="Rhea" id="RHEA:57888"/>
        <dbReference type="ChEBI" id="CHEBI:15378"/>
        <dbReference type="ChEBI" id="CHEBI:24646"/>
        <dbReference type="ChEBI" id="CHEBI:57540"/>
        <dbReference type="ChEBI" id="CHEBI:57945"/>
        <dbReference type="ChEBI" id="CHEBI:132124"/>
    </reaction>
</comment>
<comment type="cofactor">
    <cofactor evidence="1">
        <name>[4Fe-4S] cluster</name>
        <dbReference type="ChEBI" id="CHEBI:49883"/>
    </cofactor>
    <text evidence="1">Binds 1 [4Fe-4S] cluster.</text>
</comment>
<comment type="subunit">
    <text evidence="1">NDH-1 is composed of 13 different subunits. Subunits NuoB, CD, E, F, and G constitute the peripheral sector of the complex.</text>
</comment>
<comment type="subcellular location">
    <subcellularLocation>
        <location evidence="1">Cell inner membrane</location>
        <topology evidence="1">Peripheral membrane protein</topology>
        <orientation evidence="1">Cytoplasmic side</orientation>
    </subcellularLocation>
</comment>
<comment type="similarity">
    <text evidence="1">Belongs to the complex I 20 kDa subunit family.</text>
</comment>
<evidence type="ECO:0000255" key="1">
    <source>
        <dbReference type="HAMAP-Rule" id="MF_01356"/>
    </source>
</evidence>
<proteinExistence type="inferred from homology"/>
<protein>
    <recommendedName>
        <fullName evidence="1">NADH-quinone oxidoreductase subunit B</fullName>
        <ecNumber evidence="1">7.1.1.-</ecNumber>
    </recommendedName>
    <alternativeName>
        <fullName evidence="1">NADH dehydrogenase I subunit B</fullName>
    </alternativeName>
    <alternativeName>
        <fullName evidence="1">NDH-1 subunit B</fullName>
    </alternativeName>
</protein>
<sequence length="224" mass="25519">MDYTLTRIDPNGENDRYPLQKQEVVADPLDQQVHRTVYMGKLEHALHDMVNWGRKNSIWPYNFGLSCCYVEMVTSFTAVHDVARFGAEVLRASPRQADLMVVAGTCFTKMAPVIQRLYEQMLEPKWVISMGACANSGGMYDIYSVVQGVDKFLPVDVYIPGCPPRPEAYMQALMLLQESIGKERRPLSWVVGDQGVYRANMQSERERKHGERIAVTNLRTPDEI</sequence>
<name>NUOB_SERP5</name>
<accession>A8GH15</accession>
<gene>
    <name evidence="1" type="primary">nuoB</name>
    <name type="ordered locus">Spro_3307</name>
</gene>
<reference key="1">
    <citation type="submission" date="2007-09" db="EMBL/GenBank/DDBJ databases">
        <title>Complete sequence of chromosome of Serratia proteamaculans 568.</title>
        <authorList>
            <consortium name="US DOE Joint Genome Institute"/>
            <person name="Copeland A."/>
            <person name="Lucas S."/>
            <person name="Lapidus A."/>
            <person name="Barry K."/>
            <person name="Glavina del Rio T."/>
            <person name="Dalin E."/>
            <person name="Tice H."/>
            <person name="Pitluck S."/>
            <person name="Chain P."/>
            <person name="Malfatti S."/>
            <person name="Shin M."/>
            <person name="Vergez L."/>
            <person name="Schmutz J."/>
            <person name="Larimer F."/>
            <person name="Land M."/>
            <person name="Hauser L."/>
            <person name="Kyrpides N."/>
            <person name="Kim E."/>
            <person name="Taghavi S."/>
            <person name="Newman L."/>
            <person name="Vangronsveld J."/>
            <person name="van der Lelie D."/>
            <person name="Richardson P."/>
        </authorList>
    </citation>
    <scope>NUCLEOTIDE SEQUENCE [LARGE SCALE GENOMIC DNA]</scope>
    <source>
        <strain>568</strain>
    </source>
</reference>